<evidence type="ECO:0000250" key="1">
    <source>
        <dbReference type="UniProtKB" id="A0A1S6M251"/>
    </source>
</evidence>
<evidence type="ECO:0000250" key="2">
    <source>
        <dbReference type="UniProtKB" id="O43286"/>
    </source>
</evidence>
<evidence type="ECO:0000250" key="3">
    <source>
        <dbReference type="UniProtKB" id="P15291"/>
    </source>
</evidence>
<evidence type="ECO:0000250" key="4">
    <source>
        <dbReference type="UniProtKB" id="Q9JMK0"/>
    </source>
</evidence>
<evidence type="ECO:0000250" key="5">
    <source>
        <dbReference type="UniProtKB" id="Q9UBV7"/>
    </source>
</evidence>
<evidence type="ECO:0000250" key="6">
    <source>
        <dbReference type="UniProtKB" id="Q9UBX8"/>
    </source>
</evidence>
<evidence type="ECO:0000255" key="7"/>
<evidence type="ECO:0000269" key="8">
    <source>
    </source>
</evidence>
<evidence type="ECO:0000305" key="9"/>
<feature type="chain" id="PRO_0000446109" description="Beta-1,4-galactosyltransferase 5">
    <location>
        <begin position="1"/>
        <end position="381"/>
    </location>
</feature>
<feature type="topological domain" description="Cytoplasmic" evidence="9">
    <location>
        <begin position="1"/>
        <end position="11"/>
    </location>
</feature>
<feature type="transmembrane region" description="Helical; Signal-anchor for type II membrane protein" evidence="7">
    <location>
        <begin position="12"/>
        <end position="32"/>
    </location>
</feature>
<feature type="topological domain" description="Lumenal" evidence="9">
    <location>
        <begin position="33"/>
        <end position="381"/>
    </location>
</feature>
<feature type="binding site" evidence="5">
    <location>
        <begin position="162"/>
        <end position="166"/>
    </location>
    <ligand>
        <name>UDP-alpha-D-galactose</name>
        <dbReference type="ChEBI" id="CHEBI:66914"/>
    </ligand>
</feature>
<feature type="binding site" evidence="5">
    <location>
        <begin position="201"/>
        <end position="203"/>
    </location>
    <ligand>
        <name>UDP-alpha-D-galactose</name>
        <dbReference type="ChEBI" id="CHEBI:66914"/>
    </ligand>
</feature>
<feature type="binding site" evidence="5">
    <location>
        <begin position="228"/>
        <end position="229"/>
    </location>
    <ligand>
        <name>UDP-alpha-D-galactose</name>
        <dbReference type="ChEBI" id="CHEBI:66914"/>
    </ligand>
</feature>
<feature type="binding site" evidence="5">
    <location>
        <position position="229"/>
    </location>
    <ligand>
        <name>Mn(2+)</name>
        <dbReference type="ChEBI" id="CHEBI:29035"/>
    </ligand>
</feature>
<feature type="binding site" evidence="5">
    <location>
        <position position="257"/>
    </location>
    <ligand>
        <name>UDP-alpha-D-galactose</name>
        <dbReference type="ChEBI" id="CHEBI:66914"/>
    </ligand>
</feature>
<feature type="binding site" evidence="5">
    <location>
        <position position="289"/>
    </location>
    <ligand>
        <name>UDP-alpha-D-galactose</name>
        <dbReference type="ChEBI" id="CHEBI:66914"/>
    </ligand>
</feature>
<feature type="binding site" evidence="5">
    <location>
        <begin position="291"/>
        <end position="294"/>
    </location>
    <ligand>
        <name>N-acetyl-D-glucosamine</name>
        <dbReference type="ChEBI" id="CHEBI:506227"/>
    </ligand>
</feature>
<feature type="binding site" evidence="5">
    <location>
        <begin position="322"/>
        <end position="323"/>
    </location>
    <ligand>
        <name>UDP-alpha-D-galactose</name>
        <dbReference type="ChEBI" id="CHEBI:66914"/>
    </ligand>
</feature>
<feature type="binding site" evidence="5">
    <location>
        <position position="322"/>
    </location>
    <ligand>
        <name>Mn(2+)</name>
        <dbReference type="ChEBI" id="CHEBI:29035"/>
    </ligand>
</feature>
<feature type="binding site" evidence="5">
    <location>
        <position position="333"/>
    </location>
    <ligand>
        <name>N-acetyl-D-glucosamine</name>
        <dbReference type="ChEBI" id="CHEBI:506227"/>
    </ligand>
</feature>
<feature type="glycosylation site" description="N-linked (GlcNAc...) asparagine" evidence="7">
    <location>
        <position position="73"/>
    </location>
</feature>
<feature type="glycosylation site" description="N-linked (GlcNAc...) asparagine" evidence="7">
    <location>
        <position position="82"/>
    </location>
</feature>
<feature type="glycosylation site" description="N-linked (GlcNAc...) asparagine" evidence="7">
    <location>
        <position position="120"/>
    </location>
</feature>
<feature type="glycosylation site" description="N-linked (GlcNAc...) asparagine" evidence="7">
    <location>
        <position position="366"/>
    </location>
</feature>
<feature type="disulfide bond" evidence="3">
    <location>
        <begin position="106"/>
        <end position="151"/>
    </location>
</feature>
<feature type="disulfide bond" evidence="3">
    <location>
        <begin position="222"/>
        <end position="241"/>
    </location>
</feature>
<feature type="sequence conflict" description="In Ref. 1; AAZ80090." evidence="9" ref="1">
    <original>D</original>
    <variation>E</variation>
    <location>
        <position position="76"/>
    </location>
</feature>
<protein>
    <recommendedName>
        <fullName evidence="9">Beta-1,4-galactosyltransferase 5</fullName>
        <shortName>Beta-1,4-GalTase 5</shortName>
        <shortName>Beta4Gal-T5</shortName>
        <shortName>b4Gal-T5</shortName>
        <ecNumber>2.4.1.-</ecNumber>
    </recommendedName>
    <alternativeName>
        <fullName evidence="2">Beta-1,4-GalT II</fullName>
    </alternativeName>
    <alternativeName>
        <fullName>Glucosylceramide beta-1,4-galactosyltransferase</fullName>
        <ecNumber evidence="2">2.4.1.274</ecNumber>
    </alternativeName>
    <alternativeName>
        <fullName evidence="2">Lactosylceramide synthase</fullName>
        <shortName evidence="2">LacCer synthase</shortName>
    </alternativeName>
    <alternativeName>
        <fullName>UDP-Gal:beta-GlcNAc beta-1,4-galactosyltransferase 5</fullName>
    </alternativeName>
    <alternativeName>
        <fullName>UDP-galactose:beta-N-acetylglucosamine beta-1,4-galactosyltransferase 5</fullName>
    </alternativeName>
</protein>
<accession>Q3YL68</accession>
<accession>B3DJV1</accession>
<reference key="1">
    <citation type="journal article" date="2006" name="Development">
        <title>A beta1,4-galactosyltransferase is required for Bmp2-dependent patterning of the dorsoventral axis during zebrafish embryogenesis.</title>
        <authorList>
            <person name="Machingo Q.J."/>
            <person name="Fritz A."/>
            <person name="Shur B.D."/>
        </authorList>
    </citation>
    <scope>NUCLEOTIDE SEQUENCE [MRNA]</scope>
    <scope>FUNCTION</scope>
    <scope>DEVELOPMENTAL STAGE</scope>
    <scope>DISRUPTION PHENOTYPE</scope>
</reference>
<reference key="2">
    <citation type="journal article" date="2013" name="Nature">
        <title>The zebrafish reference genome sequence and its relationship to the human genome.</title>
        <authorList>
            <person name="Howe K."/>
            <person name="Clark M.D."/>
            <person name="Torroja C.F."/>
            <person name="Torrance J."/>
            <person name="Berthelot C."/>
            <person name="Muffato M."/>
            <person name="Collins J.E."/>
            <person name="Humphray S."/>
            <person name="McLaren K."/>
            <person name="Matthews L."/>
            <person name="McLaren S."/>
            <person name="Sealy I."/>
            <person name="Caccamo M."/>
            <person name="Churcher C."/>
            <person name="Scott C."/>
            <person name="Barrett J.C."/>
            <person name="Koch R."/>
            <person name="Rauch G.J."/>
            <person name="White S."/>
            <person name="Chow W."/>
            <person name="Kilian B."/>
            <person name="Quintais L.T."/>
            <person name="Guerra-Assuncao J.A."/>
            <person name="Zhou Y."/>
            <person name="Gu Y."/>
            <person name="Yen J."/>
            <person name="Vogel J.H."/>
            <person name="Eyre T."/>
            <person name="Redmond S."/>
            <person name="Banerjee R."/>
            <person name="Chi J."/>
            <person name="Fu B."/>
            <person name="Langley E."/>
            <person name="Maguire S.F."/>
            <person name="Laird G.K."/>
            <person name="Lloyd D."/>
            <person name="Kenyon E."/>
            <person name="Donaldson S."/>
            <person name="Sehra H."/>
            <person name="Almeida-King J."/>
            <person name="Loveland J."/>
            <person name="Trevanion S."/>
            <person name="Jones M."/>
            <person name="Quail M."/>
            <person name="Willey D."/>
            <person name="Hunt A."/>
            <person name="Burton J."/>
            <person name="Sims S."/>
            <person name="McLay K."/>
            <person name="Plumb B."/>
            <person name="Davis J."/>
            <person name="Clee C."/>
            <person name="Oliver K."/>
            <person name="Clark R."/>
            <person name="Riddle C."/>
            <person name="Elliot D."/>
            <person name="Threadgold G."/>
            <person name="Harden G."/>
            <person name="Ware D."/>
            <person name="Begum S."/>
            <person name="Mortimore B."/>
            <person name="Kerry G."/>
            <person name="Heath P."/>
            <person name="Phillimore B."/>
            <person name="Tracey A."/>
            <person name="Corby N."/>
            <person name="Dunn M."/>
            <person name="Johnson C."/>
            <person name="Wood J."/>
            <person name="Clark S."/>
            <person name="Pelan S."/>
            <person name="Griffiths G."/>
            <person name="Smith M."/>
            <person name="Glithero R."/>
            <person name="Howden P."/>
            <person name="Barker N."/>
            <person name="Lloyd C."/>
            <person name="Stevens C."/>
            <person name="Harley J."/>
            <person name="Holt K."/>
            <person name="Panagiotidis G."/>
            <person name="Lovell J."/>
            <person name="Beasley H."/>
            <person name="Henderson C."/>
            <person name="Gordon D."/>
            <person name="Auger K."/>
            <person name="Wright D."/>
            <person name="Collins J."/>
            <person name="Raisen C."/>
            <person name="Dyer L."/>
            <person name="Leung K."/>
            <person name="Robertson L."/>
            <person name="Ambridge K."/>
            <person name="Leongamornlert D."/>
            <person name="McGuire S."/>
            <person name="Gilderthorp R."/>
            <person name="Griffiths C."/>
            <person name="Manthravadi D."/>
            <person name="Nichol S."/>
            <person name="Barker G."/>
            <person name="Whitehead S."/>
            <person name="Kay M."/>
            <person name="Brown J."/>
            <person name="Murnane C."/>
            <person name="Gray E."/>
            <person name="Humphries M."/>
            <person name="Sycamore N."/>
            <person name="Barker D."/>
            <person name="Saunders D."/>
            <person name="Wallis J."/>
            <person name="Babbage A."/>
            <person name="Hammond S."/>
            <person name="Mashreghi-Mohammadi M."/>
            <person name="Barr L."/>
            <person name="Martin S."/>
            <person name="Wray P."/>
            <person name="Ellington A."/>
            <person name="Matthews N."/>
            <person name="Ellwood M."/>
            <person name="Woodmansey R."/>
            <person name="Clark G."/>
            <person name="Cooper J."/>
            <person name="Tromans A."/>
            <person name="Grafham D."/>
            <person name="Skuce C."/>
            <person name="Pandian R."/>
            <person name="Andrews R."/>
            <person name="Harrison E."/>
            <person name="Kimberley A."/>
            <person name="Garnett J."/>
            <person name="Fosker N."/>
            <person name="Hall R."/>
            <person name="Garner P."/>
            <person name="Kelly D."/>
            <person name="Bird C."/>
            <person name="Palmer S."/>
            <person name="Gehring I."/>
            <person name="Berger A."/>
            <person name="Dooley C.M."/>
            <person name="Ersan-Urun Z."/>
            <person name="Eser C."/>
            <person name="Geiger H."/>
            <person name="Geisler M."/>
            <person name="Karotki L."/>
            <person name="Kirn A."/>
            <person name="Konantz J."/>
            <person name="Konantz M."/>
            <person name="Oberlander M."/>
            <person name="Rudolph-Geiger S."/>
            <person name="Teucke M."/>
            <person name="Lanz C."/>
            <person name="Raddatz G."/>
            <person name="Osoegawa K."/>
            <person name="Zhu B."/>
            <person name="Rapp A."/>
            <person name="Widaa S."/>
            <person name="Langford C."/>
            <person name="Yang F."/>
            <person name="Schuster S.C."/>
            <person name="Carter N.P."/>
            <person name="Harrow J."/>
            <person name="Ning Z."/>
            <person name="Herrero J."/>
            <person name="Searle S.M."/>
            <person name="Enright A."/>
            <person name="Geisler R."/>
            <person name="Plasterk R.H."/>
            <person name="Lee C."/>
            <person name="Westerfield M."/>
            <person name="de Jong P.J."/>
            <person name="Zon L.I."/>
            <person name="Postlethwait J.H."/>
            <person name="Nusslein-Volhard C."/>
            <person name="Hubbard T.J."/>
            <person name="Roest Crollius H."/>
            <person name="Rogers J."/>
            <person name="Stemple D.L."/>
        </authorList>
    </citation>
    <scope>NUCLEOTIDE SEQUENCE [LARGE SCALE GENOMIC DNA]</scope>
    <source>
        <strain>Tuebingen</strain>
    </source>
</reference>
<reference key="3">
    <citation type="submission" date="2008-04" db="EMBL/GenBank/DDBJ databases">
        <authorList>
            <consortium name="NIH - Zebrafish Gene Collection (ZGC) project"/>
        </authorList>
    </citation>
    <scope>NUCLEOTIDE SEQUENCE [LARGE SCALE MRNA]</scope>
    <source>
        <tissue>Embryo</tissue>
    </source>
</reference>
<organism>
    <name type="scientific">Danio rerio</name>
    <name type="common">Zebrafish</name>
    <name type="synonym">Brachydanio rerio</name>
    <dbReference type="NCBI Taxonomy" id="7955"/>
    <lineage>
        <taxon>Eukaryota</taxon>
        <taxon>Metazoa</taxon>
        <taxon>Chordata</taxon>
        <taxon>Craniata</taxon>
        <taxon>Vertebrata</taxon>
        <taxon>Euteleostomi</taxon>
        <taxon>Actinopterygii</taxon>
        <taxon>Neopterygii</taxon>
        <taxon>Teleostei</taxon>
        <taxon>Ostariophysi</taxon>
        <taxon>Cypriniformes</taxon>
        <taxon>Danionidae</taxon>
        <taxon>Danioninae</taxon>
        <taxon>Danio</taxon>
    </lineage>
</organism>
<gene>
    <name type="primary">b4galt5</name>
</gene>
<comment type="function">
    <text evidence="4 8">Catalyzes the synthesis of lactosylceramide (LacCer) via the transfer of galactose from UDP-galactose to glucosylceramide (GlcCer) (By similarity). Required for proper patterning of the dorsoventral axis during embryogenesis through the regulation of BMP signaling (PubMed:16672343). Plays a role in proteoglycan glycosylation that is required for BMP-dependent specification of the dorsoventral axis (PubMed:16672343).</text>
</comment>
<comment type="catalytic activity">
    <reaction evidence="4">
        <text>a beta-D-glucosyl-(1&lt;-&gt;1')-N-acylsphing-4-enine + UDP-alpha-D-galactose = a beta-D-Gal-(1-&gt;4)-beta-D-Glc-(1&lt;-&gt;1)-Cer(d18:1(4E)) + UDP + H(+)</text>
        <dbReference type="Rhea" id="RHEA:31495"/>
        <dbReference type="ChEBI" id="CHEBI:15378"/>
        <dbReference type="ChEBI" id="CHEBI:17950"/>
        <dbReference type="ChEBI" id="CHEBI:22801"/>
        <dbReference type="ChEBI" id="CHEBI:58223"/>
        <dbReference type="ChEBI" id="CHEBI:66914"/>
        <dbReference type="EC" id="2.4.1.274"/>
    </reaction>
    <physiologicalReaction direction="left-to-right" evidence="4">
        <dbReference type="Rhea" id="RHEA:31496"/>
    </physiologicalReaction>
</comment>
<comment type="cofactor">
    <cofactor evidence="6">
        <name>Mn(2+)</name>
        <dbReference type="ChEBI" id="CHEBI:29035"/>
    </cofactor>
</comment>
<comment type="pathway">
    <text>Protein modification; protein glycosylation.</text>
</comment>
<comment type="pathway">
    <text>Sphingolipid metabolism.</text>
</comment>
<comment type="subcellular location">
    <subcellularLocation>
        <location evidence="3">Golgi apparatus</location>
        <location evidence="3">Golgi stack membrane</location>
        <topology>Single-pass type II membrane protein</topology>
    </subcellularLocation>
    <subcellularLocation>
        <location evidence="1">Golgi apparatus</location>
    </subcellularLocation>
    <text evidence="3">Trans cisternae of Golgi stack.</text>
</comment>
<comment type="developmental stage">
    <text evidence="8">Expressed by the early epiboly stage and reaches a steady state level of expression by mid-somitogenesis (PubMed:16672343). Shows widespread expression throughout the embryo during the first 24 hours of development, with enhanced expression within several structures at the 20-somite stage (PubMed:16672343).</text>
</comment>
<comment type="disruption phenotype">
    <text evidence="8">Morpholino knockdown results in dorsalized embryos which have ventrally expanded chordin expression and reduced activation of the Bmp-dependent transcription factors smad1/5/8 (PubMed:16672343). Proteoglycans exhibits defective glycosylation and a greatly reduced affinity for bmp2 (PubMed:16672343).</text>
</comment>
<comment type="similarity">
    <text evidence="9">Belongs to the glycosyltransferase 7 family.</text>
</comment>
<sequence>MPTHLRFRRRSFLGLLFLFSLSTSALYFIYSAPGIVNEYLFMVQARGIQIRENVRNMGAQVLEQVVRSAYSINGTDYTYEFNFSETDASPTPFLPEGFTYKPEQVCPEKLPSMKGRLKVNMSEIALDEVEKLLKLNDPGLSVGGHWKPHDCRPRWKVAILVPFRNRHEHLPILFRHLIPALQRQRLQFGFYVIEQAGNEPFNRAMLFNVGFKEAMKDLNWDCVIFHDVDHILENDRNYYGCGEMPRHFAVKLNKYSYMLPYEEFFGGVSGLTVKQFKRINGFPNAFWGWGGEDDDLWNRVQFAGYKVSRPHGELGRYMSIPHHHRGEVQFLGRYKLLRRSKERQSLDGLNNLNYSPLVSRRSLYTNVSVTLSRDLAPVADY</sequence>
<proteinExistence type="evidence at transcript level"/>
<dbReference type="EC" id="2.4.1.-"/>
<dbReference type="EC" id="2.4.1.274" evidence="2"/>
<dbReference type="EMBL" id="DQ104219">
    <property type="protein sequence ID" value="AAZ80090.1"/>
    <property type="molecule type" value="mRNA"/>
</dbReference>
<dbReference type="EMBL" id="FP017154">
    <property type="status" value="NOT_ANNOTATED_CDS"/>
    <property type="molecule type" value="Genomic_DNA"/>
</dbReference>
<dbReference type="EMBL" id="FP017188">
    <property type="status" value="NOT_ANNOTATED_CDS"/>
    <property type="molecule type" value="Genomic_DNA"/>
</dbReference>
<dbReference type="EMBL" id="BC163615">
    <property type="protein sequence ID" value="AAI63615.1"/>
    <property type="molecule type" value="mRNA"/>
</dbReference>
<dbReference type="RefSeq" id="NP_001038797.2">
    <property type="nucleotide sequence ID" value="NM_001045332.2"/>
</dbReference>
<dbReference type="SMR" id="Q3YL68"/>
<dbReference type="FunCoup" id="Q3YL68">
    <property type="interactions" value="33"/>
</dbReference>
<dbReference type="STRING" id="7955.ENSDARP00000055098"/>
<dbReference type="CAZy" id="GT7">
    <property type="family name" value="Glycosyltransferase Family 7"/>
</dbReference>
<dbReference type="GlyCosmos" id="Q3YL68">
    <property type="glycosylation" value="4 sites, No reported glycans"/>
</dbReference>
<dbReference type="PaxDb" id="7955-ENSDARP00000055098"/>
<dbReference type="Ensembl" id="ENSDART00000055099">
    <property type="protein sequence ID" value="ENSDARP00000055098"/>
    <property type="gene ID" value="ENSDARG00000037815"/>
</dbReference>
<dbReference type="GeneID" id="724080"/>
<dbReference type="KEGG" id="dre:724080"/>
<dbReference type="AGR" id="ZFIN:ZDB-GENE-060628-3"/>
<dbReference type="CTD" id="9334"/>
<dbReference type="ZFIN" id="ZDB-GENE-060628-3">
    <property type="gene designation" value="b4galt5"/>
</dbReference>
<dbReference type="eggNOG" id="KOG3916">
    <property type="taxonomic scope" value="Eukaryota"/>
</dbReference>
<dbReference type="HOGENOM" id="CLU_044391_6_0_1"/>
<dbReference type="InParanoid" id="Q3YL68"/>
<dbReference type="OMA" id="EPTMALG"/>
<dbReference type="OrthoDB" id="10038994at2759"/>
<dbReference type="PhylomeDB" id="Q3YL68"/>
<dbReference type="TreeFam" id="TF312834"/>
<dbReference type="Reactome" id="R-DRE-2022854">
    <property type="pathway name" value="Keratan sulfate biosynthesis"/>
</dbReference>
<dbReference type="Reactome" id="R-DRE-913709">
    <property type="pathway name" value="O-linked glycosylation of mucins"/>
</dbReference>
<dbReference type="Reactome" id="R-DRE-975577">
    <property type="pathway name" value="N-Glycan antennae elongation"/>
</dbReference>
<dbReference type="Reactome" id="R-DRE-9840309">
    <property type="pathway name" value="Glycosphingolipid biosynthesis"/>
</dbReference>
<dbReference type="UniPathway" id="UPA00378"/>
<dbReference type="PRO" id="PR:Q3YL68"/>
<dbReference type="Proteomes" id="UP000000437">
    <property type="component" value="Chromosome 23"/>
</dbReference>
<dbReference type="Bgee" id="ENSDARG00000037815">
    <property type="expression patterns" value="Expressed in retina and 8 other cell types or tissues"/>
</dbReference>
<dbReference type="GO" id="GO:0005794">
    <property type="term" value="C:Golgi apparatus"/>
    <property type="evidence" value="ECO:0000318"/>
    <property type="project" value="GO_Central"/>
</dbReference>
<dbReference type="GO" id="GO:0032580">
    <property type="term" value="C:Golgi cisterna membrane"/>
    <property type="evidence" value="ECO:0007669"/>
    <property type="project" value="UniProtKB-SubCell"/>
</dbReference>
<dbReference type="GO" id="GO:0046872">
    <property type="term" value="F:metal ion binding"/>
    <property type="evidence" value="ECO:0007669"/>
    <property type="project" value="UniProtKB-KW"/>
</dbReference>
<dbReference type="GO" id="GO:0008489">
    <property type="term" value="F:UDP-galactose:glucosylceramide beta-1,4-galactosyltransferase activity"/>
    <property type="evidence" value="ECO:0000250"/>
    <property type="project" value="UniProtKB"/>
</dbReference>
<dbReference type="GO" id="GO:0005975">
    <property type="term" value="P:carbohydrate metabolic process"/>
    <property type="evidence" value="ECO:0007669"/>
    <property type="project" value="InterPro"/>
</dbReference>
<dbReference type="GO" id="GO:0009950">
    <property type="term" value="P:dorsal/ventral axis specification"/>
    <property type="evidence" value="ECO:0000315"/>
    <property type="project" value="ZFIN"/>
</dbReference>
<dbReference type="GO" id="GO:0010706">
    <property type="term" value="P:ganglioside biosynthetic process via lactosylceramide"/>
    <property type="evidence" value="ECO:0000250"/>
    <property type="project" value="UniProtKB"/>
</dbReference>
<dbReference type="GO" id="GO:0009101">
    <property type="term" value="P:glycoprotein biosynthetic process"/>
    <property type="evidence" value="ECO:0000318"/>
    <property type="project" value="GO_Central"/>
</dbReference>
<dbReference type="GO" id="GO:0070085">
    <property type="term" value="P:glycosylation"/>
    <property type="evidence" value="ECO:0000318"/>
    <property type="project" value="GO_Central"/>
</dbReference>
<dbReference type="GO" id="GO:0048840">
    <property type="term" value="P:otolith development"/>
    <property type="evidence" value="ECO:0000315"/>
    <property type="project" value="ZFIN"/>
</dbReference>
<dbReference type="GO" id="GO:0030513">
    <property type="term" value="P:positive regulation of BMP signaling pathway"/>
    <property type="evidence" value="ECO:0000315"/>
    <property type="project" value="ZFIN"/>
</dbReference>
<dbReference type="GO" id="GO:0006486">
    <property type="term" value="P:protein glycosylation"/>
    <property type="evidence" value="ECO:0000250"/>
    <property type="project" value="UniProtKB"/>
</dbReference>
<dbReference type="GO" id="GO:0030166">
    <property type="term" value="P:proteoglycan biosynthetic process"/>
    <property type="evidence" value="ECO:0000315"/>
    <property type="project" value="ZFIN"/>
</dbReference>
<dbReference type="CDD" id="cd00899">
    <property type="entry name" value="b4GalT"/>
    <property type="match status" value="1"/>
</dbReference>
<dbReference type="FunFam" id="3.90.550.10:FF:000037">
    <property type="entry name" value="Beta-1,4-galactosyltransferase 6"/>
    <property type="match status" value="1"/>
</dbReference>
<dbReference type="Gene3D" id="3.90.550.10">
    <property type="entry name" value="Spore Coat Polysaccharide Biosynthesis Protein SpsA, Chain A"/>
    <property type="match status" value="1"/>
</dbReference>
<dbReference type="InterPro" id="IPR003859">
    <property type="entry name" value="Galactosyl_T"/>
</dbReference>
<dbReference type="InterPro" id="IPR027791">
    <property type="entry name" value="Galactosyl_T_C"/>
</dbReference>
<dbReference type="InterPro" id="IPR027995">
    <property type="entry name" value="Galactosyl_T_N"/>
</dbReference>
<dbReference type="InterPro" id="IPR029044">
    <property type="entry name" value="Nucleotide-diphossugar_trans"/>
</dbReference>
<dbReference type="PANTHER" id="PTHR19300">
    <property type="entry name" value="BETA-1,4-GALACTOSYLTRANSFERASE"/>
    <property type="match status" value="1"/>
</dbReference>
<dbReference type="PANTHER" id="PTHR19300:SF45">
    <property type="entry name" value="BETA-1,4-GALACTOSYLTRANSFERASE 5"/>
    <property type="match status" value="1"/>
</dbReference>
<dbReference type="Pfam" id="PF02709">
    <property type="entry name" value="Glyco_transf_7C"/>
    <property type="match status" value="1"/>
</dbReference>
<dbReference type="Pfam" id="PF13733">
    <property type="entry name" value="Glyco_transf_7N"/>
    <property type="match status" value="1"/>
</dbReference>
<dbReference type="PRINTS" id="PR02050">
    <property type="entry name" value="B14GALTRFASE"/>
</dbReference>
<dbReference type="SUPFAM" id="SSF53448">
    <property type="entry name" value="Nucleotide-diphospho-sugar transferases"/>
    <property type="match status" value="1"/>
</dbReference>
<name>B4GT5_DANRE</name>
<keyword id="KW-1015">Disulfide bond</keyword>
<keyword id="KW-0325">Glycoprotein</keyword>
<keyword id="KW-0328">Glycosyltransferase</keyword>
<keyword id="KW-0333">Golgi apparatus</keyword>
<keyword id="KW-0444">Lipid biosynthesis</keyword>
<keyword id="KW-0443">Lipid metabolism</keyword>
<keyword id="KW-0464">Manganese</keyword>
<keyword id="KW-0472">Membrane</keyword>
<keyword id="KW-0479">Metal-binding</keyword>
<keyword id="KW-1185">Reference proteome</keyword>
<keyword id="KW-0735">Signal-anchor</keyword>
<keyword id="KW-0746">Sphingolipid metabolism</keyword>
<keyword id="KW-0808">Transferase</keyword>
<keyword id="KW-0812">Transmembrane</keyword>
<keyword id="KW-1133">Transmembrane helix</keyword>